<evidence type="ECO:0000250" key="1"/>
<evidence type="ECO:0000255" key="2">
    <source>
        <dbReference type="PROSITE-ProRule" id="PRU00267"/>
    </source>
</evidence>
<evidence type="ECO:0000255" key="3">
    <source>
        <dbReference type="PROSITE-ProRule" id="PRU00355"/>
    </source>
</evidence>
<evidence type="ECO:0000256" key="4">
    <source>
        <dbReference type="SAM" id="MobiDB-lite"/>
    </source>
</evidence>
<evidence type="ECO:0000305" key="5"/>
<organism>
    <name type="scientific">Arabidopsis thaliana</name>
    <name type="common">Mouse-ear cress</name>
    <dbReference type="NCBI Taxonomy" id="3702"/>
    <lineage>
        <taxon>Eukaryota</taxon>
        <taxon>Viridiplantae</taxon>
        <taxon>Streptophyta</taxon>
        <taxon>Embryophyta</taxon>
        <taxon>Tracheophyta</taxon>
        <taxon>Spermatophyta</taxon>
        <taxon>Magnoliopsida</taxon>
        <taxon>eudicotyledons</taxon>
        <taxon>Gunneridae</taxon>
        <taxon>Pentapetalae</taxon>
        <taxon>rosids</taxon>
        <taxon>malvids</taxon>
        <taxon>Brassicales</taxon>
        <taxon>Brassicaceae</taxon>
        <taxon>Camelineae</taxon>
        <taxon>Arabidopsis</taxon>
    </lineage>
</organism>
<protein>
    <recommendedName>
        <fullName>Putative high mobility group B protein 11</fullName>
    </recommendedName>
    <alternativeName>
        <fullName>Nucleosome/chromatin assembly factor group D 11</fullName>
    </alternativeName>
</protein>
<feature type="chain" id="PRO_0000399936" description="Putative high mobility group B protein 11">
    <location>
        <begin position="1"/>
        <end position="337"/>
    </location>
</feature>
<feature type="domain" description="ARID" evidence="3">
    <location>
        <begin position="34"/>
        <end position="125"/>
    </location>
</feature>
<feature type="DNA-binding region" description="HMG box" evidence="2">
    <location>
        <begin position="215"/>
        <end position="282"/>
    </location>
</feature>
<feature type="region of interest" description="Disordered" evidence="4">
    <location>
        <begin position="197"/>
        <end position="221"/>
    </location>
</feature>
<feature type="region of interest" description="Disordered" evidence="4">
    <location>
        <begin position="298"/>
        <end position="337"/>
    </location>
</feature>
<feature type="compositionally biased region" description="Low complexity" evidence="4">
    <location>
        <begin position="319"/>
        <end position="329"/>
    </location>
</feature>
<dbReference type="EMBL" id="AC002328">
    <property type="protein sequence ID" value="AAF79495.1"/>
    <property type="status" value="ALT_SEQ"/>
    <property type="molecule type" value="Genomic_DNA"/>
</dbReference>
<dbReference type="EMBL" id="CP002684">
    <property type="protein sequence ID" value="AEE33278.1"/>
    <property type="molecule type" value="Genomic_DNA"/>
</dbReference>
<dbReference type="PIR" id="H96598">
    <property type="entry name" value="H96598"/>
</dbReference>
<dbReference type="RefSeq" id="NP_175961.1">
    <property type="nucleotide sequence ID" value="NM_104441.2"/>
</dbReference>
<dbReference type="SMR" id="Q9LG02"/>
<dbReference type="BioGRID" id="27239">
    <property type="interactions" value="7"/>
</dbReference>
<dbReference type="FunCoup" id="Q9LG02">
    <property type="interactions" value="829"/>
</dbReference>
<dbReference type="IntAct" id="Q9LG02">
    <property type="interactions" value="9"/>
</dbReference>
<dbReference type="STRING" id="3702.Q9LG02"/>
<dbReference type="PaxDb" id="3702-AT1G55650.1"/>
<dbReference type="EnsemblPlants" id="AT1G55650.1">
    <property type="protein sequence ID" value="AT1G55650.1"/>
    <property type="gene ID" value="AT1G55650"/>
</dbReference>
<dbReference type="GeneID" id="842014"/>
<dbReference type="Gramene" id="AT1G55650.1">
    <property type="protein sequence ID" value="AT1G55650.1"/>
    <property type="gene ID" value="AT1G55650"/>
</dbReference>
<dbReference type="KEGG" id="ath:AT1G55650"/>
<dbReference type="Araport" id="AT1G55650"/>
<dbReference type="TAIR" id="AT1G55650">
    <property type="gene designation" value="HMGB11"/>
</dbReference>
<dbReference type="eggNOG" id="KOG0381">
    <property type="taxonomic scope" value="Eukaryota"/>
</dbReference>
<dbReference type="eggNOG" id="KOG2744">
    <property type="taxonomic scope" value="Eukaryota"/>
</dbReference>
<dbReference type="HOGENOM" id="CLU_035371_0_0_1"/>
<dbReference type="InParanoid" id="Q9LG02"/>
<dbReference type="OMA" id="KCKEVIG"/>
<dbReference type="PRO" id="PR:Q9LG02"/>
<dbReference type="Proteomes" id="UP000006548">
    <property type="component" value="Chromosome 1"/>
</dbReference>
<dbReference type="ExpressionAtlas" id="Q9LG02">
    <property type="expression patterns" value="baseline and differential"/>
</dbReference>
<dbReference type="GO" id="GO:0005634">
    <property type="term" value="C:nucleus"/>
    <property type="evidence" value="ECO:0007669"/>
    <property type="project" value="UniProtKB-SubCell"/>
</dbReference>
<dbReference type="GO" id="GO:0003677">
    <property type="term" value="F:DNA binding"/>
    <property type="evidence" value="ECO:0007669"/>
    <property type="project" value="UniProtKB-KW"/>
</dbReference>
<dbReference type="GO" id="GO:0003700">
    <property type="term" value="F:DNA-binding transcription factor activity"/>
    <property type="evidence" value="ECO:0000250"/>
    <property type="project" value="TAIR"/>
</dbReference>
<dbReference type="CDD" id="cd16872">
    <property type="entry name" value="ARID_HMGB9-like"/>
    <property type="match status" value="1"/>
</dbReference>
<dbReference type="CDD" id="cd22009">
    <property type="entry name" value="HMG-box_AtHMGB9-like"/>
    <property type="match status" value="1"/>
</dbReference>
<dbReference type="FunFam" id="1.10.150.60:FF:000022">
    <property type="entry name" value="High mobility group B protein 15"/>
    <property type="match status" value="1"/>
</dbReference>
<dbReference type="Gene3D" id="1.10.150.60">
    <property type="entry name" value="ARID DNA-binding domain"/>
    <property type="match status" value="1"/>
</dbReference>
<dbReference type="Gene3D" id="1.10.30.10">
    <property type="entry name" value="High mobility group box domain"/>
    <property type="match status" value="1"/>
</dbReference>
<dbReference type="InterPro" id="IPR001606">
    <property type="entry name" value="ARID_dom"/>
</dbReference>
<dbReference type="InterPro" id="IPR036431">
    <property type="entry name" value="ARID_dom_sf"/>
</dbReference>
<dbReference type="InterPro" id="IPR045303">
    <property type="entry name" value="ARID_HMGB9-like"/>
</dbReference>
<dbReference type="InterPro" id="IPR009071">
    <property type="entry name" value="HMG_box_dom"/>
</dbReference>
<dbReference type="InterPro" id="IPR036910">
    <property type="entry name" value="HMG_box_dom_sf"/>
</dbReference>
<dbReference type="PANTHER" id="PTHR46691:SF6">
    <property type="entry name" value="HIGH MOBILITY GROUP B PROTEIN 10-RELATED"/>
    <property type="match status" value="1"/>
</dbReference>
<dbReference type="PANTHER" id="PTHR46691">
    <property type="entry name" value="HIGH MOBILITY GROUP B PROTEIN 9"/>
    <property type="match status" value="1"/>
</dbReference>
<dbReference type="Pfam" id="PF01388">
    <property type="entry name" value="ARID"/>
    <property type="match status" value="1"/>
</dbReference>
<dbReference type="Pfam" id="PF00505">
    <property type="entry name" value="HMG_box"/>
    <property type="match status" value="1"/>
</dbReference>
<dbReference type="SMART" id="SM01014">
    <property type="entry name" value="ARID"/>
    <property type="match status" value="1"/>
</dbReference>
<dbReference type="SMART" id="SM00501">
    <property type="entry name" value="BRIGHT"/>
    <property type="match status" value="1"/>
</dbReference>
<dbReference type="SMART" id="SM00398">
    <property type="entry name" value="HMG"/>
    <property type="match status" value="1"/>
</dbReference>
<dbReference type="SUPFAM" id="SSF46774">
    <property type="entry name" value="ARID-like"/>
    <property type="match status" value="1"/>
</dbReference>
<dbReference type="SUPFAM" id="SSF47095">
    <property type="entry name" value="HMG-box"/>
    <property type="match status" value="1"/>
</dbReference>
<dbReference type="PROSITE" id="PS51011">
    <property type="entry name" value="ARID"/>
    <property type="match status" value="1"/>
</dbReference>
<dbReference type="PROSITE" id="PS50118">
    <property type="entry name" value="HMG_BOX_2"/>
    <property type="match status" value="1"/>
</dbReference>
<name>HMG11_ARATH</name>
<keyword id="KW-0238">DNA-binding</keyword>
<keyword id="KW-0539">Nucleus</keyword>
<keyword id="KW-1185">Reference proteome</keyword>
<keyword id="KW-0804">Transcription</keyword>
<keyword id="KW-0805">Transcription regulation</keyword>
<gene>
    <name type="primary">HMGB11</name>
    <name type="synonym">NFD11</name>
    <name type="ordered locus">At1g55650</name>
    <name type="ORF">F20N2.8</name>
</gene>
<comment type="function">
    <text evidence="1">Binds preferentially DNA with A/T-rich content.</text>
</comment>
<comment type="interaction">
    <interactant intactId="EBI-15201560">
        <id>Q9LG02</id>
    </interactant>
    <interactant intactId="EBI-4473135">
        <id>Q9LTT3</id>
        <label>HMGB10</label>
    </interactant>
    <organismsDiffer>false</organismsDiffer>
    <experiments>3</experiments>
</comment>
<comment type="interaction">
    <interactant intactId="EBI-15201560">
        <id>Q9LG02</id>
    </interactant>
    <interactant intactId="EBI-4425221">
        <id>Q9SGS2</id>
        <label>HMGB9</label>
    </interactant>
    <organismsDiffer>false</organismsDiffer>
    <experiments>3</experiments>
</comment>
<comment type="subcellular location">
    <subcellularLocation>
        <location evidence="2 3">Nucleus</location>
    </subcellularLocation>
</comment>
<comment type="similarity">
    <text evidence="5">Belongs to the HMGB family.</text>
</comment>
<comment type="sequence caution" evidence="5">
    <conflict type="erroneous gene model prediction">
        <sequence resource="EMBL-CDS" id="AAF79495"/>
    </conflict>
</comment>
<proteinExistence type="evidence at protein level"/>
<accession>Q9LG02</accession>
<reference key="1">
    <citation type="journal article" date="2000" name="Nature">
        <title>Sequence and analysis of chromosome 1 of the plant Arabidopsis thaliana.</title>
        <authorList>
            <person name="Theologis A."/>
            <person name="Ecker J.R."/>
            <person name="Palm C.J."/>
            <person name="Federspiel N.A."/>
            <person name="Kaul S."/>
            <person name="White O."/>
            <person name="Alonso J."/>
            <person name="Altafi H."/>
            <person name="Araujo R."/>
            <person name="Bowman C.L."/>
            <person name="Brooks S.Y."/>
            <person name="Buehler E."/>
            <person name="Chan A."/>
            <person name="Chao Q."/>
            <person name="Chen H."/>
            <person name="Cheuk R.F."/>
            <person name="Chin C.W."/>
            <person name="Chung M.K."/>
            <person name="Conn L."/>
            <person name="Conway A.B."/>
            <person name="Conway A.R."/>
            <person name="Creasy T.H."/>
            <person name="Dewar K."/>
            <person name="Dunn P."/>
            <person name="Etgu P."/>
            <person name="Feldblyum T.V."/>
            <person name="Feng J.-D."/>
            <person name="Fong B."/>
            <person name="Fujii C.Y."/>
            <person name="Gill J.E."/>
            <person name="Goldsmith A.D."/>
            <person name="Haas B."/>
            <person name="Hansen N.F."/>
            <person name="Hughes B."/>
            <person name="Huizar L."/>
            <person name="Hunter J.L."/>
            <person name="Jenkins J."/>
            <person name="Johnson-Hopson C."/>
            <person name="Khan S."/>
            <person name="Khaykin E."/>
            <person name="Kim C.J."/>
            <person name="Koo H.L."/>
            <person name="Kremenetskaia I."/>
            <person name="Kurtz D.B."/>
            <person name="Kwan A."/>
            <person name="Lam B."/>
            <person name="Langin-Hooper S."/>
            <person name="Lee A."/>
            <person name="Lee J.M."/>
            <person name="Lenz C.A."/>
            <person name="Li J.H."/>
            <person name="Li Y.-P."/>
            <person name="Lin X."/>
            <person name="Liu S.X."/>
            <person name="Liu Z.A."/>
            <person name="Luros J.S."/>
            <person name="Maiti R."/>
            <person name="Marziali A."/>
            <person name="Militscher J."/>
            <person name="Miranda M."/>
            <person name="Nguyen M."/>
            <person name="Nierman W.C."/>
            <person name="Osborne B.I."/>
            <person name="Pai G."/>
            <person name="Peterson J."/>
            <person name="Pham P.K."/>
            <person name="Rizzo M."/>
            <person name="Rooney T."/>
            <person name="Rowley D."/>
            <person name="Sakano H."/>
            <person name="Salzberg S.L."/>
            <person name="Schwartz J.R."/>
            <person name="Shinn P."/>
            <person name="Southwick A.M."/>
            <person name="Sun H."/>
            <person name="Tallon L.J."/>
            <person name="Tambunga G."/>
            <person name="Toriumi M.J."/>
            <person name="Town C.D."/>
            <person name="Utterback T."/>
            <person name="Van Aken S."/>
            <person name="Vaysberg M."/>
            <person name="Vysotskaia V.S."/>
            <person name="Walker M."/>
            <person name="Wu D."/>
            <person name="Yu G."/>
            <person name="Fraser C.M."/>
            <person name="Venter J.C."/>
            <person name="Davis R.W."/>
        </authorList>
    </citation>
    <scope>NUCLEOTIDE SEQUENCE [LARGE SCALE GENOMIC DNA]</scope>
    <source>
        <strain>cv. Columbia</strain>
    </source>
</reference>
<reference key="2">
    <citation type="journal article" date="2017" name="Plant J.">
        <title>Araport11: a complete reannotation of the Arabidopsis thaliana reference genome.</title>
        <authorList>
            <person name="Cheng C.Y."/>
            <person name="Krishnakumar V."/>
            <person name="Chan A.P."/>
            <person name="Thibaud-Nissen F."/>
            <person name="Schobel S."/>
            <person name="Town C.D."/>
        </authorList>
    </citation>
    <scope>GENOME REANNOTATION</scope>
    <source>
        <strain>cv. Columbia</strain>
    </source>
</reference>
<sequence>MSTDSSQFEVVPANASALDNDVSSHMSMLYQDIVRNPELFWEMLRDFHESSDKKFKIPIVGGKSLDLHRLFNEVTSRGGLEKVIKDRRCKEVIDAFNFKTTITNSAFVLRKSYLKMLFEFEHLYYFQAPLSTFWEKEKALKLLIEKSANRDKDSQELKPGTVITGIIDGKFESGYLISTKVGSEKLKGMLYHISPETKRGKKKAKSSQGDSHKPPKRQRTGYNFFVAEQSVRIKAENAGQKVSSPKNFGNMWTNLSESDRKVYYEKSREDGKRYKMEILQYRSLMESRVAEIVAATDAGTSASAAETADEASQENLAKTDACTSASSAAETEDEVSQ</sequence>